<reference key="1">
    <citation type="journal article" date="2009" name="Vaccine">
        <title>Whole genome sequence analysis of Mycobacterium bovis bacillus Calmette-Guerin (BCG) Tokyo 172: a comparative study of BCG vaccine substrains.</title>
        <authorList>
            <person name="Seki M."/>
            <person name="Honda I."/>
            <person name="Fujita I."/>
            <person name="Yano I."/>
            <person name="Yamamoto S."/>
            <person name="Koyama A."/>
        </authorList>
    </citation>
    <scope>NUCLEOTIDE SEQUENCE [LARGE SCALE GENOMIC DNA]</scope>
    <source>
        <strain>BCG / Tokyo 172 / ATCC 35737 / TMC 1019</strain>
    </source>
</reference>
<keyword id="KW-0004">4Fe-4S</keyword>
<keyword id="KW-0963">Cytoplasm</keyword>
<keyword id="KW-0408">Iron</keyword>
<keyword id="KW-0411">Iron-sulfur</keyword>
<keyword id="KW-0479">Metal-binding</keyword>
<keyword id="KW-0949">S-adenosyl-L-methionine</keyword>
<keyword id="KW-0808">Transferase</keyword>
<organism>
    <name type="scientific">Mycobacterium bovis (strain BCG / Tokyo 172 / ATCC 35737 / TMC 1019)</name>
    <dbReference type="NCBI Taxonomy" id="561275"/>
    <lineage>
        <taxon>Bacteria</taxon>
        <taxon>Bacillati</taxon>
        <taxon>Actinomycetota</taxon>
        <taxon>Actinomycetes</taxon>
        <taxon>Mycobacteriales</taxon>
        <taxon>Mycobacteriaceae</taxon>
        <taxon>Mycobacterium</taxon>
        <taxon>Mycobacterium tuberculosis complex</taxon>
    </lineage>
</organism>
<gene>
    <name evidence="1" type="primary">lipA</name>
    <name type="ordered locus">JTY_2228</name>
</gene>
<accession>C1AQD3</accession>
<dbReference type="EC" id="2.8.1.8" evidence="1"/>
<dbReference type="EMBL" id="AP010918">
    <property type="protein sequence ID" value="BAH26512.1"/>
    <property type="molecule type" value="Genomic_DNA"/>
</dbReference>
<dbReference type="RefSeq" id="WP_003411460.1">
    <property type="nucleotide sequence ID" value="NZ_CP014566.1"/>
</dbReference>
<dbReference type="SMR" id="C1AQD3"/>
<dbReference type="GeneID" id="45426194"/>
<dbReference type="KEGG" id="mbt:JTY_2228"/>
<dbReference type="HOGENOM" id="CLU_033144_2_1_11"/>
<dbReference type="UniPathway" id="UPA00538">
    <property type="reaction ID" value="UER00593"/>
</dbReference>
<dbReference type="GO" id="GO:0005737">
    <property type="term" value="C:cytoplasm"/>
    <property type="evidence" value="ECO:0007669"/>
    <property type="project" value="UniProtKB-SubCell"/>
</dbReference>
<dbReference type="GO" id="GO:0051539">
    <property type="term" value="F:4 iron, 4 sulfur cluster binding"/>
    <property type="evidence" value="ECO:0007669"/>
    <property type="project" value="UniProtKB-UniRule"/>
</dbReference>
<dbReference type="GO" id="GO:0016992">
    <property type="term" value="F:lipoate synthase activity"/>
    <property type="evidence" value="ECO:0007669"/>
    <property type="project" value="UniProtKB-UniRule"/>
</dbReference>
<dbReference type="GO" id="GO:0046872">
    <property type="term" value="F:metal ion binding"/>
    <property type="evidence" value="ECO:0007669"/>
    <property type="project" value="UniProtKB-KW"/>
</dbReference>
<dbReference type="CDD" id="cd01335">
    <property type="entry name" value="Radical_SAM"/>
    <property type="match status" value="1"/>
</dbReference>
<dbReference type="FunFam" id="3.20.20.70:FF:000116">
    <property type="entry name" value="Lipoyl synthase"/>
    <property type="match status" value="1"/>
</dbReference>
<dbReference type="Gene3D" id="3.20.20.70">
    <property type="entry name" value="Aldolase class I"/>
    <property type="match status" value="1"/>
</dbReference>
<dbReference type="HAMAP" id="MF_00206">
    <property type="entry name" value="Lipoyl_synth"/>
    <property type="match status" value="1"/>
</dbReference>
<dbReference type="InterPro" id="IPR013785">
    <property type="entry name" value="Aldolase_TIM"/>
</dbReference>
<dbReference type="InterPro" id="IPR006638">
    <property type="entry name" value="Elp3/MiaA/NifB-like_rSAM"/>
</dbReference>
<dbReference type="InterPro" id="IPR031691">
    <property type="entry name" value="LIAS_N"/>
</dbReference>
<dbReference type="InterPro" id="IPR003698">
    <property type="entry name" value="Lipoyl_synth"/>
</dbReference>
<dbReference type="InterPro" id="IPR007197">
    <property type="entry name" value="rSAM"/>
</dbReference>
<dbReference type="NCBIfam" id="TIGR00510">
    <property type="entry name" value="lipA"/>
    <property type="match status" value="1"/>
</dbReference>
<dbReference type="NCBIfam" id="NF004019">
    <property type="entry name" value="PRK05481.1"/>
    <property type="match status" value="1"/>
</dbReference>
<dbReference type="NCBIfam" id="NF009544">
    <property type="entry name" value="PRK12928.1"/>
    <property type="match status" value="1"/>
</dbReference>
<dbReference type="PANTHER" id="PTHR10949">
    <property type="entry name" value="LIPOYL SYNTHASE"/>
    <property type="match status" value="1"/>
</dbReference>
<dbReference type="PANTHER" id="PTHR10949:SF0">
    <property type="entry name" value="LIPOYL SYNTHASE, MITOCHONDRIAL"/>
    <property type="match status" value="1"/>
</dbReference>
<dbReference type="Pfam" id="PF16881">
    <property type="entry name" value="LIAS_N"/>
    <property type="match status" value="1"/>
</dbReference>
<dbReference type="Pfam" id="PF04055">
    <property type="entry name" value="Radical_SAM"/>
    <property type="match status" value="1"/>
</dbReference>
<dbReference type="PIRSF" id="PIRSF005963">
    <property type="entry name" value="Lipoyl_synth"/>
    <property type="match status" value="1"/>
</dbReference>
<dbReference type="SFLD" id="SFLDF00271">
    <property type="entry name" value="lipoyl_synthase"/>
    <property type="match status" value="1"/>
</dbReference>
<dbReference type="SFLD" id="SFLDS00029">
    <property type="entry name" value="Radical_SAM"/>
    <property type="match status" value="1"/>
</dbReference>
<dbReference type="SMART" id="SM00729">
    <property type="entry name" value="Elp3"/>
    <property type="match status" value="1"/>
</dbReference>
<dbReference type="SUPFAM" id="SSF102114">
    <property type="entry name" value="Radical SAM enzymes"/>
    <property type="match status" value="1"/>
</dbReference>
<dbReference type="PROSITE" id="PS51918">
    <property type="entry name" value="RADICAL_SAM"/>
    <property type="match status" value="1"/>
</dbReference>
<sequence>MSVAAEGRRLLRLEVRNAQTPIERKPPWIKTRARIGPEYTELKNLVRREGLHTVCEEAGCPNIFECWEDREATFLIGGDQCTRRCDFCQIDTGKPAELDRDEPRRVADSVRTMGLRYATVTGVARDDLPDGGAWLYAATVRAIKELNPSTGVELLIPDFNGEPTRLAEVFESGPEVLAHNVETVPRIFKRIRPAFTYRRSLGVLTAARDAGLVTKSNLILGLGETSDEVRTALGDLRDAGCDIVTITQYLRPSARHHPVERWVKPEEFVQFARFAEGLGFAGVLAGPLVRSSYRAGRLYEQARNSRALASR</sequence>
<comment type="function">
    <text evidence="1">Catalyzes the radical-mediated insertion of two sulfur atoms into the C-6 and C-8 positions of the octanoyl moiety bound to the lipoyl domains of lipoate-dependent enzymes, thereby converting the octanoylated domains into lipoylated derivatives.</text>
</comment>
<comment type="catalytic activity">
    <reaction evidence="1">
        <text>[[Fe-S] cluster scaffold protein carrying a second [4Fe-4S](2+) cluster] + N(6)-octanoyl-L-lysyl-[protein] + 2 oxidized [2Fe-2S]-[ferredoxin] + 2 S-adenosyl-L-methionine + 4 H(+) = [[Fe-S] cluster scaffold protein] + N(6)-[(R)-dihydrolipoyl]-L-lysyl-[protein] + 4 Fe(3+) + 2 hydrogen sulfide + 2 5'-deoxyadenosine + 2 L-methionine + 2 reduced [2Fe-2S]-[ferredoxin]</text>
        <dbReference type="Rhea" id="RHEA:16585"/>
        <dbReference type="Rhea" id="RHEA-COMP:9928"/>
        <dbReference type="Rhea" id="RHEA-COMP:10000"/>
        <dbReference type="Rhea" id="RHEA-COMP:10001"/>
        <dbReference type="Rhea" id="RHEA-COMP:10475"/>
        <dbReference type="Rhea" id="RHEA-COMP:14568"/>
        <dbReference type="Rhea" id="RHEA-COMP:14569"/>
        <dbReference type="ChEBI" id="CHEBI:15378"/>
        <dbReference type="ChEBI" id="CHEBI:17319"/>
        <dbReference type="ChEBI" id="CHEBI:29034"/>
        <dbReference type="ChEBI" id="CHEBI:29919"/>
        <dbReference type="ChEBI" id="CHEBI:33722"/>
        <dbReference type="ChEBI" id="CHEBI:33737"/>
        <dbReference type="ChEBI" id="CHEBI:33738"/>
        <dbReference type="ChEBI" id="CHEBI:57844"/>
        <dbReference type="ChEBI" id="CHEBI:59789"/>
        <dbReference type="ChEBI" id="CHEBI:78809"/>
        <dbReference type="ChEBI" id="CHEBI:83100"/>
        <dbReference type="EC" id="2.8.1.8"/>
    </reaction>
</comment>
<comment type="cofactor">
    <cofactor evidence="1">
        <name>[4Fe-4S] cluster</name>
        <dbReference type="ChEBI" id="CHEBI:49883"/>
    </cofactor>
    <text evidence="1">Binds 2 [4Fe-4S] clusters per subunit. One cluster is coordinated with 3 cysteines and an exchangeable S-adenosyl-L-methionine.</text>
</comment>
<comment type="pathway">
    <text evidence="1">Protein modification; protein lipoylation via endogenous pathway; protein N(6)-(lipoyl)lysine from octanoyl-[acyl-carrier-protein]: step 2/2.</text>
</comment>
<comment type="subcellular location">
    <subcellularLocation>
        <location evidence="1">Cytoplasm</location>
    </subcellularLocation>
</comment>
<comment type="similarity">
    <text evidence="1">Belongs to the radical SAM superfamily. Lipoyl synthase family.</text>
</comment>
<protein>
    <recommendedName>
        <fullName evidence="1">Lipoyl synthase</fullName>
        <ecNumber evidence="1">2.8.1.8</ecNumber>
    </recommendedName>
    <alternativeName>
        <fullName evidence="1">Lip-syn</fullName>
        <shortName evidence="1">LS</shortName>
    </alternativeName>
    <alternativeName>
        <fullName evidence="1">Lipoate synthase</fullName>
    </alternativeName>
    <alternativeName>
        <fullName evidence="1">Lipoic acid synthase</fullName>
    </alternativeName>
    <alternativeName>
        <fullName evidence="1">Sulfur insertion protein LipA</fullName>
    </alternativeName>
</protein>
<proteinExistence type="inferred from homology"/>
<feature type="chain" id="PRO_1000124641" description="Lipoyl synthase">
    <location>
        <begin position="1"/>
        <end position="311"/>
    </location>
</feature>
<feature type="domain" description="Radical SAM core" evidence="2">
    <location>
        <begin position="67"/>
        <end position="281"/>
    </location>
</feature>
<feature type="binding site" evidence="1">
    <location>
        <position position="55"/>
    </location>
    <ligand>
        <name>[4Fe-4S] cluster</name>
        <dbReference type="ChEBI" id="CHEBI:49883"/>
        <label>1</label>
    </ligand>
</feature>
<feature type="binding site" evidence="1">
    <location>
        <position position="60"/>
    </location>
    <ligand>
        <name>[4Fe-4S] cluster</name>
        <dbReference type="ChEBI" id="CHEBI:49883"/>
        <label>1</label>
    </ligand>
</feature>
<feature type="binding site" evidence="1">
    <location>
        <position position="66"/>
    </location>
    <ligand>
        <name>[4Fe-4S] cluster</name>
        <dbReference type="ChEBI" id="CHEBI:49883"/>
        <label>1</label>
    </ligand>
</feature>
<feature type="binding site" evidence="1">
    <location>
        <position position="81"/>
    </location>
    <ligand>
        <name>[4Fe-4S] cluster</name>
        <dbReference type="ChEBI" id="CHEBI:49883"/>
        <label>2</label>
        <note>4Fe-4S-S-AdoMet</note>
    </ligand>
</feature>
<feature type="binding site" evidence="1">
    <location>
        <position position="85"/>
    </location>
    <ligand>
        <name>[4Fe-4S] cluster</name>
        <dbReference type="ChEBI" id="CHEBI:49883"/>
        <label>2</label>
        <note>4Fe-4S-S-AdoMet</note>
    </ligand>
</feature>
<feature type="binding site" evidence="1">
    <location>
        <position position="88"/>
    </location>
    <ligand>
        <name>[4Fe-4S] cluster</name>
        <dbReference type="ChEBI" id="CHEBI:49883"/>
        <label>2</label>
        <note>4Fe-4S-S-AdoMet</note>
    </ligand>
</feature>
<feature type="binding site" evidence="1">
    <location>
        <position position="292"/>
    </location>
    <ligand>
        <name>[4Fe-4S] cluster</name>
        <dbReference type="ChEBI" id="CHEBI:49883"/>
        <label>1</label>
    </ligand>
</feature>
<name>LIPA_MYCBT</name>
<evidence type="ECO:0000255" key="1">
    <source>
        <dbReference type="HAMAP-Rule" id="MF_00206"/>
    </source>
</evidence>
<evidence type="ECO:0000255" key="2">
    <source>
        <dbReference type="PROSITE-ProRule" id="PRU01266"/>
    </source>
</evidence>